<comment type="function">
    <text evidence="1">E1-like enzyme which activates UFM1.</text>
</comment>
<comment type="similarity">
    <text evidence="3">Belongs to the ubiquitin-activating E1 family. UBA5 subfamily.</text>
</comment>
<accession>B4IK21</accession>
<evidence type="ECO:0000250" key="1"/>
<evidence type="ECO:0000256" key="2">
    <source>
        <dbReference type="SAM" id="MobiDB-lite"/>
    </source>
</evidence>
<evidence type="ECO:0000305" key="3"/>
<protein>
    <recommendedName>
        <fullName>Ubiquitin-like modifier-activating enzyme 5</fullName>
        <shortName>Ubiquitin-activating enzyme 5</shortName>
    </recommendedName>
</protein>
<gene>
    <name type="ORF">GM13085</name>
</gene>
<reference key="1">
    <citation type="journal article" date="2007" name="Nature">
        <title>Evolution of genes and genomes on the Drosophila phylogeny.</title>
        <authorList>
            <consortium name="Drosophila 12 genomes consortium"/>
        </authorList>
    </citation>
    <scope>NUCLEOTIDE SEQUENCE [LARGE SCALE GENOMIC DNA]</scope>
    <source>
        <strain>Rob3c / Tucson 14021-0248.25</strain>
    </source>
</reference>
<organism>
    <name type="scientific">Drosophila sechellia</name>
    <name type="common">Fruit fly</name>
    <dbReference type="NCBI Taxonomy" id="7238"/>
    <lineage>
        <taxon>Eukaryota</taxon>
        <taxon>Metazoa</taxon>
        <taxon>Ecdysozoa</taxon>
        <taxon>Arthropoda</taxon>
        <taxon>Hexapoda</taxon>
        <taxon>Insecta</taxon>
        <taxon>Pterygota</taxon>
        <taxon>Neoptera</taxon>
        <taxon>Endopterygota</taxon>
        <taxon>Diptera</taxon>
        <taxon>Brachycera</taxon>
        <taxon>Muscomorpha</taxon>
        <taxon>Ephydroidea</taxon>
        <taxon>Drosophilidae</taxon>
        <taxon>Drosophila</taxon>
        <taxon>Sophophora</taxon>
    </lineage>
</organism>
<feature type="chain" id="PRO_0000391948" description="Ubiquitin-like modifier-activating enzyme 5">
    <location>
        <begin position="1"/>
        <end position="404"/>
    </location>
</feature>
<feature type="region of interest" description="Disordered" evidence="2">
    <location>
        <begin position="372"/>
        <end position="393"/>
    </location>
</feature>
<feature type="compositionally biased region" description="Low complexity" evidence="2">
    <location>
        <begin position="382"/>
        <end position="391"/>
    </location>
</feature>
<feature type="active site" description="Glycyl thioester intermediate" evidence="1">
    <location>
        <position position="250"/>
    </location>
</feature>
<feature type="binding site" evidence="1">
    <location>
        <position position="83"/>
    </location>
    <ligand>
        <name>ATP</name>
        <dbReference type="ChEBI" id="CHEBI:30616"/>
    </ligand>
</feature>
<feature type="binding site" evidence="1">
    <location>
        <position position="104"/>
    </location>
    <ligand>
        <name>ATP</name>
        <dbReference type="ChEBI" id="CHEBI:30616"/>
    </ligand>
</feature>
<feature type="binding site" evidence="1">
    <location>
        <position position="127"/>
    </location>
    <ligand>
        <name>ATP</name>
        <dbReference type="ChEBI" id="CHEBI:30616"/>
    </ligand>
</feature>
<feature type="binding site" evidence="1">
    <location>
        <position position="150"/>
    </location>
    <ligand>
        <name>ATP</name>
        <dbReference type="ChEBI" id="CHEBI:30616"/>
    </ligand>
</feature>
<feature type="binding site" evidence="1">
    <location>
        <position position="184"/>
    </location>
    <ligand>
        <name>ATP</name>
        <dbReference type="ChEBI" id="CHEBI:30616"/>
    </ligand>
</feature>
<feature type="binding site" evidence="1">
    <location>
        <position position="226"/>
    </location>
    <ligand>
        <name>Zn(2+)</name>
        <dbReference type="ChEBI" id="CHEBI:29105"/>
    </ligand>
</feature>
<feature type="binding site" evidence="1">
    <location>
        <position position="229"/>
    </location>
    <ligand>
        <name>Zn(2+)</name>
        <dbReference type="ChEBI" id="CHEBI:29105"/>
    </ligand>
</feature>
<feature type="binding site" evidence="1">
    <location>
        <position position="303"/>
    </location>
    <ligand>
        <name>Zn(2+)</name>
        <dbReference type="ChEBI" id="CHEBI:29105"/>
    </ligand>
</feature>
<feature type="binding site" evidence="1">
    <location>
        <position position="308"/>
    </location>
    <ligand>
        <name>Zn(2+)</name>
        <dbReference type="ChEBI" id="CHEBI:29105"/>
    </ligand>
</feature>
<proteinExistence type="inferred from homology"/>
<keyword id="KW-0067">ATP-binding</keyword>
<keyword id="KW-0479">Metal-binding</keyword>
<keyword id="KW-0547">Nucleotide-binding</keyword>
<keyword id="KW-1185">Reference proteome</keyword>
<keyword id="KW-0833">Ubl conjugation pathway</keyword>
<keyword id="KW-0862">Zinc</keyword>
<name>UBA5_DROSE</name>
<dbReference type="EMBL" id="CH480851">
    <property type="protein sequence ID" value="EDW51393.1"/>
    <property type="molecule type" value="Genomic_DNA"/>
</dbReference>
<dbReference type="SMR" id="B4IK21"/>
<dbReference type="STRING" id="7238.B4IK21"/>
<dbReference type="EnsemblMetazoa" id="FBtr0196070">
    <property type="protein sequence ID" value="FBpp0194562"/>
    <property type="gene ID" value="FBgn0168016"/>
</dbReference>
<dbReference type="EnsemblMetazoa" id="XM_002044045.2">
    <property type="protein sequence ID" value="XP_002044081.1"/>
    <property type="gene ID" value="LOC6619868"/>
</dbReference>
<dbReference type="GeneID" id="6619868"/>
<dbReference type="KEGG" id="dse:6619868"/>
<dbReference type="CTD" id="79876"/>
<dbReference type="HOGENOM" id="CLU_013325_0_1_1"/>
<dbReference type="OMA" id="MNIVKDY"/>
<dbReference type="OrthoDB" id="28895at7215"/>
<dbReference type="PhylomeDB" id="B4IK21"/>
<dbReference type="Proteomes" id="UP000001292">
    <property type="component" value="Unassembled WGS sequence"/>
</dbReference>
<dbReference type="GO" id="GO:0005829">
    <property type="term" value="C:cytosol"/>
    <property type="evidence" value="ECO:0007669"/>
    <property type="project" value="TreeGrafter"/>
</dbReference>
<dbReference type="GO" id="GO:0005524">
    <property type="term" value="F:ATP binding"/>
    <property type="evidence" value="ECO:0007669"/>
    <property type="project" value="UniProtKB-KW"/>
</dbReference>
<dbReference type="GO" id="GO:0046872">
    <property type="term" value="F:metal ion binding"/>
    <property type="evidence" value="ECO:0007669"/>
    <property type="project" value="UniProtKB-KW"/>
</dbReference>
<dbReference type="GO" id="GO:0071566">
    <property type="term" value="F:UFM1 activating enzyme activity"/>
    <property type="evidence" value="ECO:0007669"/>
    <property type="project" value="TreeGrafter"/>
</dbReference>
<dbReference type="GO" id="GO:0050905">
    <property type="term" value="P:neuromuscular process"/>
    <property type="evidence" value="ECO:0007669"/>
    <property type="project" value="EnsemblMetazoa"/>
</dbReference>
<dbReference type="GO" id="GO:0071569">
    <property type="term" value="P:protein ufmylation"/>
    <property type="evidence" value="ECO:0007669"/>
    <property type="project" value="TreeGrafter"/>
</dbReference>
<dbReference type="CDD" id="cd00757">
    <property type="entry name" value="ThiF_MoeB_HesA_family"/>
    <property type="match status" value="1"/>
</dbReference>
<dbReference type="FunFam" id="3.40.50.720:FF:000066">
    <property type="entry name" value="Putative ubiquitin-like modifier-activating enzyme 5"/>
    <property type="match status" value="1"/>
</dbReference>
<dbReference type="Gene3D" id="3.40.50.720">
    <property type="entry name" value="NAD(P)-binding Rossmann-like Domain"/>
    <property type="match status" value="1"/>
</dbReference>
<dbReference type="InterPro" id="IPR029752">
    <property type="entry name" value="D-isomer_DH_CS1"/>
</dbReference>
<dbReference type="InterPro" id="IPR045886">
    <property type="entry name" value="ThiF/MoeB/HesA"/>
</dbReference>
<dbReference type="InterPro" id="IPR000594">
    <property type="entry name" value="ThiF_NAD_FAD-bd"/>
</dbReference>
<dbReference type="InterPro" id="IPR035985">
    <property type="entry name" value="Ubiquitin-activating_enz"/>
</dbReference>
<dbReference type="PANTHER" id="PTHR10953">
    <property type="entry name" value="UBIQUITIN-ACTIVATING ENZYME E1"/>
    <property type="match status" value="1"/>
</dbReference>
<dbReference type="PANTHER" id="PTHR10953:SF9">
    <property type="entry name" value="UBIQUITIN-LIKE MODIFIER-ACTIVATING ENZYME 5"/>
    <property type="match status" value="1"/>
</dbReference>
<dbReference type="Pfam" id="PF00899">
    <property type="entry name" value="ThiF"/>
    <property type="match status" value="1"/>
</dbReference>
<dbReference type="SUPFAM" id="SSF69572">
    <property type="entry name" value="Activating enzymes of the ubiquitin-like proteins"/>
    <property type="match status" value="1"/>
</dbReference>
<sequence>MSHAIDELQAIIADLKTELETEPKSSVGVASNSRLARDRIDRMSAEVVDSNPYSRLMALQRMNIVKDYERIRDKAVAIVGVGGVGSVTADMLTRCGIGKLILFDYDKVELANMNRLFFTPDQAGLSKVAAAAATLSFINPDVEIETHNYNITTVENFDRFLDTISQGGRIAGQPVDLVLSCVDNFEARMAINAACNERNLNWFESGVSENAVSGHIQFIRPGDTACFACAPPLVVAENIDEKTLKREGVCAASLPTTMGITAGFLVQNALKYLLNFGEVSDYLGYNALSDFFPKMTLKPNPQCDDRNCIVRQKEFQARPKPVVIEEKAVSEEPLHATNEWGIELVAEDAPQSNPTPAETPVMGEGLRLAYEAPEKSSETSEETVTAATADETSLEDLMAQMKSM</sequence>